<name>MSHR_CEBAL</name>
<dbReference type="EMBL" id="AY205128">
    <property type="protein sequence ID" value="AAP31002.1"/>
    <property type="molecule type" value="Genomic_DNA"/>
</dbReference>
<dbReference type="SMR" id="Q864G9"/>
<dbReference type="GlyCosmos" id="Q864G9">
    <property type="glycosylation" value="1 site, No reported glycans"/>
</dbReference>
<dbReference type="GO" id="GO:0005886">
    <property type="term" value="C:plasma membrane"/>
    <property type="evidence" value="ECO:0000250"/>
    <property type="project" value="UniProtKB"/>
</dbReference>
<dbReference type="GO" id="GO:0004980">
    <property type="term" value="F:melanocyte-stimulating hormone receptor activity"/>
    <property type="evidence" value="ECO:0007669"/>
    <property type="project" value="InterPro"/>
</dbReference>
<dbReference type="GO" id="GO:0007189">
    <property type="term" value="P:adenylate cyclase-activating G protein-coupled receptor signaling pathway"/>
    <property type="evidence" value="ECO:0007669"/>
    <property type="project" value="UniProtKB-ARBA"/>
</dbReference>
<dbReference type="FunFam" id="1.20.1070.10:FF:000211">
    <property type="entry name" value="Melanocyte-stimulating hormone receptor"/>
    <property type="match status" value="1"/>
</dbReference>
<dbReference type="Gene3D" id="1.20.1070.10">
    <property type="entry name" value="Rhodopsin 7-helix transmembrane proteins"/>
    <property type="match status" value="1"/>
</dbReference>
<dbReference type="InterPro" id="IPR000276">
    <property type="entry name" value="GPCR_Rhodpsn"/>
</dbReference>
<dbReference type="InterPro" id="IPR017452">
    <property type="entry name" value="GPCR_Rhodpsn_7TM"/>
</dbReference>
<dbReference type="InterPro" id="IPR001671">
    <property type="entry name" value="Melcrt_ACTH_rcpt"/>
</dbReference>
<dbReference type="InterPro" id="IPR000761">
    <property type="entry name" value="MSH_rcpt"/>
</dbReference>
<dbReference type="PANTHER" id="PTHR22750">
    <property type="entry name" value="G-PROTEIN COUPLED RECEPTOR"/>
    <property type="match status" value="1"/>
</dbReference>
<dbReference type="Pfam" id="PF00001">
    <property type="entry name" value="7tm_1"/>
    <property type="match status" value="1"/>
</dbReference>
<dbReference type="PRINTS" id="PR00237">
    <property type="entry name" value="GPCRRHODOPSN"/>
</dbReference>
<dbReference type="PRINTS" id="PR00534">
    <property type="entry name" value="MCRFAMILY"/>
</dbReference>
<dbReference type="PRINTS" id="PR00536">
    <property type="entry name" value="MELNOCYTESHR"/>
</dbReference>
<dbReference type="SMART" id="SM01381">
    <property type="entry name" value="7TM_GPCR_Srsx"/>
    <property type="match status" value="1"/>
</dbReference>
<dbReference type="SUPFAM" id="SSF81321">
    <property type="entry name" value="Family A G protein-coupled receptor-like"/>
    <property type="match status" value="1"/>
</dbReference>
<dbReference type="PROSITE" id="PS00237">
    <property type="entry name" value="G_PROTEIN_RECEP_F1_1"/>
    <property type="match status" value="1"/>
</dbReference>
<dbReference type="PROSITE" id="PS50262">
    <property type="entry name" value="G_PROTEIN_RECEP_F1_2"/>
    <property type="match status" value="1"/>
</dbReference>
<protein>
    <recommendedName>
        <fullName>Melanocyte-stimulating hormone receptor</fullName>
        <shortName>MSH-R</shortName>
    </recommendedName>
    <alternativeName>
        <fullName>Melanocortin receptor 1</fullName>
        <shortName>MC1-R</shortName>
    </alternativeName>
</protein>
<reference key="1">
    <citation type="journal article" date="2003" name="Am. J. Phys. Anthropol.">
        <title>Evolution of a pigmentation gene, the melanocortin-1 receptor, in primates.</title>
        <authorList>
            <person name="Mundy N.I."/>
            <person name="Kelly J."/>
        </authorList>
    </citation>
    <scope>NUCLEOTIDE SEQUENCE [GENOMIC DNA]</scope>
    <source>
        <strain>Isolate 1</strain>
    </source>
</reference>
<keyword id="KW-1003">Cell membrane</keyword>
<keyword id="KW-0297">G-protein coupled receptor</keyword>
<keyword id="KW-0325">Glycoprotein</keyword>
<keyword id="KW-0449">Lipoprotein</keyword>
<keyword id="KW-0472">Membrane</keyword>
<keyword id="KW-0564">Palmitate</keyword>
<keyword id="KW-0675">Receptor</keyword>
<keyword id="KW-0807">Transducer</keyword>
<keyword id="KW-0812">Transmembrane</keyword>
<keyword id="KW-1133">Transmembrane helix</keyword>
<sequence length="316" mass="34757">MPMQGAQRKLLGSLNSTPTATSNLGLAANHTGAPCLEVSIPDGLFLSLGLVSLVENMLVVAAIAKNRNLHSPMYCFICCLALSDLLVSGSNMLETAVVVLLEAGALATRASVVQQLHNTIDVLTYSSMLCSLCFVGAIAVDRYISIFYALRYHSIMTLPRVQRVIAAIWVASVTSSTLFITYYEHVVALLCLVVFLTMLVLMAVLYVHMLARACQHAQGITRLHKRQPPAHQGFGLRGAATLTILLGIFFLCWGPFFLHLTLVVFCPQHLTCSCIFKNFKVFLTLIICNTIIDPLIYAFRSQELCRTLKEVLLCSW</sequence>
<feature type="chain" id="PRO_0000069801" description="Melanocyte-stimulating hormone receptor">
    <location>
        <begin position="1"/>
        <end position="316"/>
    </location>
</feature>
<feature type="topological domain" description="Extracellular" evidence="2">
    <location>
        <begin position="1"/>
        <end position="37"/>
    </location>
</feature>
<feature type="transmembrane region" description="Helical; Name=1" evidence="2">
    <location>
        <begin position="38"/>
        <end position="63"/>
    </location>
</feature>
<feature type="topological domain" description="Cytoplasmic" evidence="2">
    <location>
        <begin position="64"/>
        <end position="72"/>
    </location>
</feature>
<feature type="transmembrane region" description="Helical; Name=2" evidence="2">
    <location>
        <begin position="73"/>
        <end position="93"/>
    </location>
</feature>
<feature type="topological domain" description="Extracellular" evidence="2">
    <location>
        <begin position="94"/>
        <end position="118"/>
    </location>
</feature>
<feature type="transmembrane region" description="Helical; Name=3" evidence="2">
    <location>
        <begin position="119"/>
        <end position="140"/>
    </location>
</feature>
<feature type="topological domain" description="Cytoplasmic" evidence="2">
    <location>
        <begin position="141"/>
        <end position="163"/>
    </location>
</feature>
<feature type="transmembrane region" description="Helical; Name=4" evidence="2">
    <location>
        <begin position="164"/>
        <end position="183"/>
    </location>
</feature>
<feature type="topological domain" description="Extracellular" evidence="2">
    <location>
        <begin position="184"/>
        <end position="191"/>
    </location>
</feature>
<feature type="transmembrane region" description="Helical; Name=5" evidence="2">
    <location>
        <begin position="192"/>
        <end position="210"/>
    </location>
</feature>
<feature type="topological domain" description="Cytoplasmic" evidence="2">
    <location>
        <begin position="211"/>
        <end position="239"/>
    </location>
</feature>
<feature type="transmembrane region" description="Helical; Name=6" evidence="2">
    <location>
        <begin position="240"/>
        <end position="265"/>
    </location>
</feature>
<feature type="topological domain" description="Extracellular" evidence="2">
    <location>
        <begin position="266"/>
        <end position="278"/>
    </location>
</feature>
<feature type="transmembrane region" description="Helical; Name=7" evidence="2">
    <location>
        <begin position="279"/>
        <end position="299"/>
    </location>
</feature>
<feature type="topological domain" description="Cytoplasmic" evidence="2">
    <location>
        <begin position="300"/>
        <end position="316"/>
    </location>
</feature>
<feature type="lipid moiety-binding region" description="S-palmitoyl cysteine" evidence="2">
    <location>
        <position position="314"/>
    </location>
</feature>
<feature type="glycosylation site" description="N-linked (GlcNAc...) asparagine" evidence="2">
    <location>
        <position position="29"/>
    </location>
</feature>
<accession>Q864G9</accession>
<gene>
    <name type="primary">MC1R</name>
</gene>
<proteinExistence type="inferred from homology"/>
<evidence type="ECO:0000250" key="1">
    <source>
        <dbReference type="UniProtKB" id="Q01726"/>
    </source>
</evidence>
<evidence type="ECO:0000255" key="2"/>
<evidence type="ECO:0000255" key="3">
    <source>
        <dbReference type="PROSITE-ProRule" id="PRU00521"/>
    </source>
</evidence>
<comment type="function">
    <text evidence="1">Receptor for MSH (alpha, beta and gamma) and ACTH. The activity of this receptor is mediated by G proteins which activate adenylate cyclase. Mediates melanogenesis, the production of eumelanin (black/brown) and phaeomelanin (red/yellow), via regulation of cAMP signaling in melanocytes.</text>
</comment>
<comment type="subunit">
    <text evidence="1">Interacts with MGRN1, but does not undergo MGRN1-mediated ubiquitination; this interaction competes with GNAS-binding and thus inhibits agonist-induced cAMP production. Interacts with OPN3; the interaction results in a decrease in MC1R-mediated cAMP signaling and ultimately a decrease in melanin production in melanocytes.</text>
</comment>
<comment type="subcellular location">
    <subcellularLocation>
        <location evidence="1">Cell membrane</location>
        <topology evidence="2">Multi-pass membrane protein</topology>
    </subcellularLocation>
</comment>
<comment type="similarity">
    <text evidence="3">Belongs to the G-protein coupled receptor 1 family.</text>
</comment>
<organism>
    <name type="scientific">Cebus albifrons</name>
    <name type="common">White-fronted capuchin</name>
    <dbReference type="NCBI Taxonomy" id="9514"/>
    <lineage>
        <taxon>Eukaryota</taxon>
        <taxon>Metazoa</taxon>
        <taxon>Chordata</taxon>
        <taxon>Craniata</taxon>
        <taxon>Vertebrata</taxon>
        <taxon>Euteleostomi</taxon>
        <taxon>Mammalia</taxon>
        <taxon>Eutheria</taxon>
        <taxon>Euarchontoglires</taxon>
        <taxon>Primates</taxon>
        <taxon>Haplorrhini</taxon>
        <taxon>Platyrrhini</taxon>
        <taxon>Cebidae</taxon>
        <taxon>Cebinae</taxon>
        <taxon>Cebus</taxon>
    </lineage>
</organism>